<gene>
    <name evidence="1" type="primary">rps17e</name>
    <name type="ordered locus">TV0646</name>
    <name type="ORF">TVG0642098</name>
</gene>
<feature type="chain" id="PRO_0000141569" description="Small ribosomal subunit protein eS17">
    <location>
        <begin position="1"/>
        <end position="75"/>
    </location>
</feature>
<comment type="similarity">
    <text evidence="1">Belongs to the eukaryotic ribosomal protein eS17 family.</text>
</comment>
<comment type="sequence caution" evidence="2">
    <conflict type="erroneous initiation">
        <sequence resource="EMBL-CDS" id="BAB59788"/>
    </conflict>
</comment>
<organism>
    <name type="scientific">Thermoplasma volcanium (strain ATCC 51530 / DSM 4299 / JCM 9571 / NBRC 15438 / GSS1)</name>
    <dbReference type="NCBI Taxonomy" id="273116"/>
    <lineage>
        <taxon>Archaea</taxon>
        <taxon>Methanobacteriati</taxon>
        <taxon>Thermoplasmatota</taxon>
        <taxon>Thermoplasmata</taxon>
        <taxon>Thermoplasmatales</taxon>
        <taxon>Thermoplasmataceae</taxon>
        <taxon>Thermoplasma</taxon>
    </lineage>
</organism>
<proteinExistence type="inferred from homology"/>
<sequence>MGSIRPFNVKRTAEEIAEKYPSLFTEKFEENKRKLEKMMPDVSKRTINIISGYLTRYVVKKKEKAEREIEENAAS</sequence>
<protein>
    <recommendedName>
        <fullName evidence="1">Small ribosomal subunit protein eS17</fullName>
    </recommendedName>
    <alternativeName>
        <fullName evidence="2">30S ribosomal protein S17e</fullName>
    </alternativeName>
</protein>
<accession>Q97B13</accession>
<dbReference type="EMBL" id="BA000011">
    <property type="protein sequence ID" value="BAB59788.1"/>
    <property type="status" value="ALT_INIT"/>
    <property type="molecule type" value="Genomic_DNA"/>
</dbReference>
<dbReference type="RefSeq" id="WP_010916905.1">
    <property type="nucleotide sequence ID" value="NC_002689.2"/>
</dbReference>
<dbReference type="SMR" id="Q97B13"/>
<dbReference type="STRING" id="273116.gene:9381434"/>
<dbReference type="PaxDb" id="273116-14324862"/>
<dbReference type="GeneID" id="1441753"/>
<dbReference type="KEGG" id="tvo:TVG0642098"/>
<dbReference type="eggNOG" id="arCOG01885">
    <property type="taxonomic scope" value="Archaea"/>
</dbReference>
<dbReference type="HOGENOM" id="CLU_2115608_0_0_2"/>
<dbReference type="OrthoDB" id="52479at2157"/>
<dbReference type="PhylomeDB" id="Q97B13"/>
<dbReference type="Proteomes" id="UP000001017">
    <property type="component" value="Chromosome"/>
</dbReference>
<dbReference type="GO" id="GO:1990904">
    <property type="term" value="C:ribonucleoprotein complex"/>
    <property type="evidence" value="ECO:0007669"/>
    <property type="project" value="UniProtKB-KW"/>
</dbReference>
<dbReference type="GO" id="GO:0005840">
    <property type="term" value="C:ribosome"/>
    <property type="evidence" value="ECO:0007669"/>
    <property type="project" value="UniProtKB-KW"/>
</dbReference>
<dbReference type="GO" id="GO:0003735">
    <property type="term" value="F:structural constituent of ribosome"/>
    <property type="evidence" value="ECO:0007669"/>
    <property type="project" value="InterPro"/>
</dbReference>
<dbReference type="GO" id="GO:0006412">
    <property type="term" value="P:translation"/>
    <property type="evidence" value="ECO:0007669"/>
    <property type="project" value="UniProtKB-UniRule"/>
</dbReference>
<dbReference type="Gene3D" id="1.10.60.20">
    <property type="entry name" value="Ribosomal protein S17e-like"/>
    <property type="match status" value="1"/>
</dbReference>
<dbReference type="HAMAP" id="MF_00511">
    <property type="entry name" value="Ribosomal_eS17"/>
    <property type="match status" value="1"/>
</dbReference>
<dbReference type="InterPro" id="IPR001210">
    <property type="entry name" value="Ribosomal_eS17"/>
</dbReference>
<dbReference type="InterPro" id="IPR018273">
    <property type="entry name" value="Ribosomal_eS17_CS"/>
</dbReference>
<dbReference type="InterPro" id="IPR036401">
    <property type="entry name" value="Ribosomal_eS17_sf"/>
</dbReference>
<dbReference type="NCBIfam" id="NF002242">
    <property type="entry name" value="PRK01151.1"/>
    <property type="match status" value="1"/>
</dbReference>
<dbReference type="Pfam" id="PF00833">
    <property type="entry name" value="Ribosomal_S17e"/>
    <property type="match status" value="1"/>
</dbReference>
<dbReference type="SUPFAM" id="SSF116820">
    <property type="entry name" value="Rps17e-like"/>
    <property type="match status" value="1"/>
</dbReference>
<dbReference type="PROSITE" id="PS00712">
    <property type="entry name" value="RIBOSOMAL_S17E"/>
    <property type="match status" value="1"/>
</dbReference>
<evidence type="ECO:0000255" key="1">
    <source>
        <dbReference type="HAMAP-Rule" id="MF_00511"/>
    </source>
</evidence>
<evidence type="ECO:0000305" key="2"/>
<name>RS17E_THEVO</name>
<keyword id="KW-0687">Ribonucleoprotein</keyword>
<keyword id="KW-0689">Ribosomal protein</keyword>
<reference key="1">
    <citation type="journal article" date="2000" name="Proc. Natl. Acad. Sci. U.S.A.">
        <title>Archaeal adaptation to higher temperatures revealed by genomic sequence of Thermoplasma volcanium.</title>
        <authorList>
            <person name="Kawashima T."/>
            <person name="Amano N."/>
            <person name="Koike H."/>
            <person name="Makino S."/>
            <person name="Higuchi S."/>
            <person name="Kawashima-Ohya Y."/>
            <person name="Watanabe K."/>
            <person name="Yamazaki M."/>
            <person name="Kanehori K."/>
            <person name="Kawamoto T."/>
            <person name="Nunoshiba T."/>
            <person name="Yamamoto Y."/>
            <person name="Aramaki H."/>
            <person name="Makino K."/>
            <person name="Suzuki M."/>
        </authorList>
    </citation>
    <scope>NUCLEOTIDE SEQUENCE [LARGE SCALE GENOMIC DNA]</scope>
    <source>
        <strain>ATCC 51530 / DSM 4299 / JCM 9571 / NBRC 15438 / GSS1</strain>
    </source>
</reference>